<reference key="1">
    <citation type="journal article" date="2006" name="J. Bacteriol.">
        <title>Genome sequence of Aeromonas hydrophila ATCC 7966T: jack of all trades.</title>
        <authorList>
            <person name="Seshadri R."/>
            <person name="Joseph S.W."/>
            <person name="Chopra A.K."/>
            <person name="Sha J."/>
            <person name="Shaw J."/>
            <person name="Graf J."/>
            <person name="Haft D.H."/>
            <person name="Wu M."/>
            <person name="Ren Q."/>
            <person name="Rosovitz M.J."/>
            <person name="Madupu R."/>
            <person name="Tallon L."/>
            <person name="Kim M."/>
            <person name="Jin S."/>
            <person name="Vuong H."/>
            <person name="Stine O.C."/>
            <person name="Ali A."/>
            <person name="Horneman A.J."/>
            <person name="Heidelberg J.F."/>
        </authorList>
    </citation>
    <scope>NUCLEOTIDE SEQUENCE [LARGE SCALE GENOMIC DNA]</scope>
    <source>
        <strain>ATCC 7966 / DSM 30187 / BCRC 13018 / CCUG 14551 / JCM 1027 / KCTC 2358 / NCIMB 9240 / NCTC 8049</strain>
    </source>
</reference>
<organism>
    <name type="scientific">Aeromonas hydrophila subsp. hydrophila (strain ATCC 7966 / DSM 30187 / BCRC 13018 / CCUG 14551 / JCM 1027 / KCTC 2358 / NCIMB 9240 / NCTC 8049)</name>
    <dbReference type="NCBI Taxonomy" id="380703"/>
    <lineage>
        <taxon>Bacteria</taxon>
        <taxon>Pseudomonadati</taxon>
        <taxon>Pseudomonadota</taxon>
        <taxon>Gammaproteobacteria</taxon>
        <taxon>Aeromonadales</taxon>
        <taxon>Aeromonadaceae</taxon>
        <taxon>Aeromonas</taxon>
    </lineage>
</organism>
<accession>A0KGH8</accession>
<protein>
    <recommendedName>
        <fullName evidence="1">5'-nucleotidase SurE</fullName>
        <ecNumber evidence="1">3.1.3.5</ecNumber>
    </recommendedName>
    <alternativeName>
        <fullName evidence="1">Nucleoside 5'-monophosphate phosphohydrolase</fullName>
    </alternativeName>
</protein>
<evidence type="ECO:0000255" key="1">
    <source>
        <dbReference type="HAMAP-Rule" id="MF_00060"/>
    </source>
</evidence>
<keyword id="KW-0963">Cytoplasm</keyword>
<keyword id="KW-0378">Hydrolase</keyword>
<keyword id="KW-0479">Metal-binding</keyword>
<keyword id="KW-0547">Nucleotide-binding</keyword>
<keyword id="KW-1185">Reference proteome</keyword>
<comment type="function">
    <text evidence="1">Nucleotidase that shows phosphatase activity on nucleoside 5'-monophosphates.</text>
</comment>
<comment type="catalytic activity">
    <reaction evidence="1">
        <text>a ribonucleoside 5'-phosphate + H2O = a ribonucleoside + phosphate</text>
        <dbReference type="Rhea" id="RHEA:12484"/>
        <dbReference type="ChEBI" id="CHEBI:15377"/>
        <dbReference type="ChEBI" id="CHEBI:18254"/>
        <dbReference type="ChEBI" id="CHEBI:43474"/>
        <dbReference type="ChEBI" id="CHEBI:58043"/>
        <dbReference type="EC" id="3.1.3.5"/>
    </reaction>
</comment>
<comment type="cofactor">
    <cofactor evidence="1">
        <name>a divalent metal cation</name>
        <dbReference type="ChEBI" id="CHEBI:60240"/>
    </cofactor>
    <text evidence="1">Binds 1 divalent metal cation per subunit.</text>
</comment>
<comment type="subcellular location">
    <subcellularLocation>
        <location evidence="1">Cytoplasm</location>
    </subcellularLocation>
</comment>
<comment type="similarity">
    <text evidence="1">Belongs to the SurE nucleotidase family.</text>
</comment>
<feature type="chain" id="PRO_1000007699" description="5'-nucleotidase SurE">
    <location>
        <begin position="1"/>
        <end position="253"/>
    </location>
</feature>
<feature type="binding site" evidence="1">
    <location>
        <position position="8"/>
    </location>
    <ligand>
        <name>a divalent metal cation</name>
        <dbReference type="ChEBI" id="CHEBI:60240"/>
    </ligand>
</feature>
<feature type="binding site" evidence="1">
    <location>
        <position position="9"/>
    </location>
    <ligand>
        <name>a divalent metal cation</name>
        <dbReference type="ChEBI" id="CHEBI:60240"/>
    </ligand>
</feature>
<feature type="binding site" evidence="1">
    <location>
        <position position="39"/>
    </location>
    <ligand>
        <name>a divalent metal cation</name>
        <dbReference type="ChEBI" id="CHEBI:60240"/>
    </ligand>
</feature>
<feature type="binding site" evidence="1">
    <location>
        <position position="97"/>
    </location>
    <ligand>
        <name>a divalent metal cation</name>
        <dbReference type="ChEBI" id="CHEBI:60240"/>
    </ligand>
</feature>
<gene>
    <name evidence="1" type="primary">surE</name>
    <name type="ordered locus">AHA_0826</name>
</gene>
<name>SURE_AERHH</name>
<dbReference type="EC" id="3.1.3.5" evidence="1"/>
<dbReference type="EMBL" id="CP000462">
    <property type="protein sequence ID" value="ABK39784.1"/>
    <property type="molecule type" value="Genomic_DNA"/>
</dbReference>
<dbReference type="RefSeq" id="WP_011704774.1">
    <property type="nucleotide sequence ID" value="NC_008570.1"/>
</dbReference>
<dbReference type="RefSeq" id="YP_855369.1">
    <property type="nucleotide sequence ID" value="NC_008570.1"/>
</dbReference>
<dbReference type="SMR" id="A0KGH8"/>
<dbReference type="STRING" id="380703.AHA_0826"/>
<dbReference type="EnsemblBacteria" id="ABK39784">
    <property type="protein sequence ID" value="ABK39784"/>
    <property type="gene ID" value="AHA_0826"/>
</dbReference>
<dbReference type="GeneID" id="4489306"/>
<dbReference type="KEGG" id="aha:AHA_0826"/>
<dbReference type="PATRIC" id="fig|380703.7.peg.826"/>
<dbReference type="eggNOG" id="COG0496">
    <property type="taxonomic scope" value="Bacteria"/>
</dbReference>
<dbReference type="HOGENOM" id="CLU_045192_1_2_6"/>
<dbReference type="OrthoDB" id="9780815at2"/>
<dbReference type="Proteomes" id="UP000000756">
    <property type="component" value="Chromosome"/>
</dbReference>
<dbReference type="GO" id="GO:0005737">
    <property type="term" value="C:cytoplasm"/>
    <property type="evidence" value="ECO:0007669"/>
    <property type="project" value="UniProtKB-SubCell"/>
</dbReference>
<dbReference type="GO" id="GO:0008254">
    <property type="term" value="F:3'-nucleotidase activity"/>
    <property type="evidence" value="ECO:0007669"/>
    <property type="project" value="TreeGrafter"/>
</dbReference>
<dbReference type="GO" id="GO:0008253">
    <property type="term" value="F:5'-nucleotidase activity"/>
    <property type="evidence" value="ECO:0007669"/>
    <property type="project" value="UniProtKB-UniRule"/>
</dbReference>
<dbReference type="GO" id="GO:0004309">
    <property type="term" value="F:exopolyphosphatase activity"/>
    <property type="evidence" value="ECO:0007669"/>
    <property type="project" value="TreeGrafter"/>
</dbReference>
<dbReference type="GO" id="GO:0046872">
    <property type="term" value="F:metal ion binding"/>
    <property type="evidence" value="ECO:0007669"/>
    <property type="project" value="UniProtKB-UniRule"/>
</dbReference>
<dbReference type="GO" id="GO:0000166">
    <property type="term" value="F:nucleotide binding"/>
    <property type="evidence" value="ECO:0007669"/>
    <property type="project" value="UniProtKB-KW"/>
</dbReference>
<dbReference type="FunFam" id="3.40.1210.10:FF:000001">
    <property type="entry name" value="5'/3'-nucleotidase SurE"/>
    <property type="match status" value="1"/>
</dbReference>
<dbReference type="Gene3D" id="3.40.1210.10">
    <property type="entry name" value="Survival protein SurE-like phosphatase/nucleotidase"/>
    <property type="match status" value="1"/>
</dbReference>
<dbReference type="HAMAP" id="MF_00060">
    <property type="entry name" value="SurE"/>
    <property type="match status" value="1"/>
</dbReference>
<dbReference type="InterPro" id="IPR030048">
    <property type="entry name" value="SurE"/>
</dbReference>
<dbReference type="InterPro" id="IPR002828">
    <property type="entry name" value="SurE-like_Pase/nucleotidase"/>
</dbReference>
<dbReference type="InterPro" id="IPR036523">
    <property type="entry name" value="SurE-like_sf"/>
</dbReference>
<dbReference type="NCBIfam" id="NF001489">
    <property type="entry name" value="PRK00346.1-3"/>
    <property type="match status" value="1"/>
</dbReference>
<dbReference type="NCBIfam" id="NF001490">
    <property type="entry name" value="PRK00346.1-4"/>
    <property type="match status" value="1"/>
</dbReference>
<dbReference type="NCBIfam" id="TIGR00087">
    <property type="entry name" value="surE"/>
    <property type="match status" value="1"/>
</dbReference>
<dbReference type="PANTHER" id="PTHR30457">
    <property type="entry name" value="5'-NUCLEOTIDASE SURE"/>
    <property type="match status" value="1"/>
</dbReference>
<dbReference type="PANTHER" id="PTHR30457:SF12">
    <property type="entry name" value="5'_3'-NUCLEOTIDASE SURE"/>
    <property type="match status" value="1"/>
</dbReference>
<dbReference type="Pfam" id="PF01975">
    <property type="entry name" value="SurE"/>
    <property type="match status" value="1"/>
</dbReference>
<dbReference type="SUPFAM" id="SSF64167">
    <property type="entry name" value="SurE-like"/>
    <property type="match status" value="1"/>
</dbReference>
<sequence length="253" mass="26677">MRILVSNDDGVHAEGIRALSEALTACGEVIVVAPDRNRSGASHSLTLEVPLRVTRLGETGFNGSESYAVKGTPTDCVHLAVNELVRPEPDMVVAGINHGANLGDDVIYSGTVAAATEGRHLGFPSLAISLVGKTHFATAAHYAAQLVKGMMVHPLPADQILNVNVPDLPLDQIKGIRVTRLGNRHRAESVICSEDPRGQPIYWIGPPGSQQDAGEGTDFAAIEQGYVSITPLTIDMTAYSSLAGLGAWLDLQG</sequence>
<proteinExistence type="inferred from homology"/>